<evidence type="ECO:0000255" key="1">
    <source>
        <dbReference type="PROSITE-ProRule" id="PRU00258"/>
    </source>
</evidence>
<evidence type="ECO:0000305" key="2"/>
<accession>Q70LM4</accession>
<sequence>MNNIETYYPVTPLQQGLIFHSLLEPESGAYIVQMGLKLQGPLNIPLFEQAWQCLVDRHAIFRTRFVGGKVKEYVQVVLKDLKISLVEHDLIHLSSSEQEAFLHHFAKEDRKRGFDIEQAPLMRLNVFHLNSETVHFLWTLHHVLIDGWSMPLVFGEVFAAYEMLSKGQPLSLPPVRAYRDYIVWLKKQDLQQAEAFWRTYMQGFTEATPLSFGRAYKNPYLDQKQYRELDLTVSEQTSKALQTLARQHRLTVNTIVQGAWALLLNRYSGQDDIVFGATVSGRPADLPGVETMIGLFINTLPVRVQVNAEESVINWLKTLQQQQADFRQYEYTPLVEIQGWSDVPRGQSLFESILVFENMPVGKSGGGESAISIVDVYSEEQTNYPFTLVAASGKTIDIKVKFDESQFELAAIERVVDQLHSLLSSIAKNAKQRIGDLSLISESERQQVLVEWNQTAEDYPSGLCIHQAFEQQAEKTPDAVAVAYKNRELTYAQLNERANQLAHRLIRKGVKPDTLVGICLERSPEMIIGILGVMKAGAAYVPIDPAHPQERIAYMVADSQASALLTQQSLLEILPVTAAHVICLDSDLLADEPVDNASSEVTEQNLAYVIYTSGSTGLPKGVMIEHHSAINLAYALIDAFDIQPTSRVLQFTSFSFDVSVSEVVMALLAGATLVIEDRESLLPGPELIQVLQEQRITTVSMVSSVLAALPDADLPDLHTLIVGGEAPSRELVARYAPGRQFFNCYGPTEATVCSTMMLCQAGMNNPPIGRPIANATVYVLDANLNPVPVGVPGELYIGGKGLARGYWNRPELTAESFIPHPFGTAGERLYRTGDLVRYRQDGNLEFLGRIDHQVKIRGYRIELGEIENAIRQHPAVQEAVVIAREEKAGDKRLAAYLVAAGKAQPPAEEIALFLKETLPEYMVPAGVVWLDAIPLTVNGKVDRRALPVPDWGQLSTKREYVAPRTPTEEMVANIWSQVLSVERVGSFDDFFELGGHSLLATQTVSRLKEAFGVDLPLRVLFECSTVNKLSEWIAAAGEDKSGLSRIPLVPVSRDRHLPLSFAQQRLWFFDRLMPNSALYNIPTAVRLQGELDMDALEQSLQTIIQRHESLRTTFTDHNGEAVSVIHPEIDWKLERIDLRERSEEMRNEAGLRLAKEEANRPFDLVTGPLMRATIIQTDERDFIFLLNVHHIIADGWSAGILIRELFHCYQAFAKAEAPQLAELPIQYADYAYWQREWLTSDVLDEQLSYWRAKLGGAEPLLALPTDRPRPAVQSYAGSSISLLFDDELRANLLALSKREGTTLFMTLLAAFQVFLYRYTGQDDILVGTPEAGRSRQETEGLIGFFINTLVMRTDLSGEPSFKEVLARVRETALGAYAHQDLPFEKLVDELNVERSLSYSPLFQVMFVLQNIPVQADALDGIRILPLEGSQQVETTKFDLTLTMAEAANGLAATFEYNTALFERNTVERMIGHFSSLLKAVAANANQAITALPLMSEVEEQQLVLEWNDTAVAYSTEQLVHELVAQVARDMPDQPAVVTRDQLLTYGQLEAKANQLAHYLQKQGVGRGSLVGICVERSVEMVIGQLAIMKAGAAYIPMDPAYPKERLAFMMHDASMAIVLTQAKLRQKLPADTSRLICLDADWETIAQEPTAALVNTTAASDLAYVIYTSGSTGTPKGVEIEHAALLNLIFWHQRAYDVTATDRASQIAGTAFDASVWEIWPYVTKGATLYLPEEEIRLVPEKLRDWLVASNITVSFLPTPLTESMLALEWPGDTALRYMLTGGDKLHHYPSEKIPFTLVNQYGPTENTVVATAGIVPKEAGQTAAPTIGRPIDNVQVYILDAHRQPVPVGVSGELYIGGSSLARGYLNRPDLTQERFVAHPFTEKAGARLYRTGDLVRSLPDGSIEFIGRADDQTSIRGFRVELGEVETAIVALPAVKEAVVTVCTDKQGTKRLAAYLVLEEGAALATGDIRKALKETLPDYMVPAFFTQLAYLPLTPNGKVDRKNLPAPDFQRPELEGEFVSPSTEKERRLAAIWKDVLGIEQIGIHDNFFELGGDSILSIQIVSRANQAGLSLAPKQLFEYQTIAELAEIVEEKAAVQAEQGAVTGELPLLPIQKWFFRLPLANRDHWNQSVLLSIQAGIDPAALKQAVGQLMFQHDAFRMRYTQSESGWLQAMDAPSETIPFRVEDLSQLAPEEQSSAIEAIANETQTQLSLRAGQVVQTIYFHLGKEVPGRLLIVAHHLVVDGVSWRIILEDLQHAYQQIAAGQEVKLPAKTTSYKEWAQELERYAHSEAFKHEKSYWLSKSSVHSTELPADMPDSAENTEATVKSVHFSLTVEETKALLQQVPQAYRTQINDVLLAALAKALGQWTGKRSVFVNVEGHGREELAEHLDLSRTVGWFTSMYPVHLQWDETFSVRRALLTTKEELRAIPNKGLGYGVLRYLHAEQEIVDAISRIQADVLFNYMGKIDQIVGSDSLFGSAPESSGANLCPSAQRHHLLDVNSVVAGEQLHVTWRYSEKLQRESTIAAVAESFMAALREIVAHCTLPEAGGYSPSDFPLAVLEQKQIDKHIGFDRQIEDVYTLSPLQQGMLFHSLYNQDSGDYVVQFAVTFQNLDVSVLEKAWQNVLDRHSILRTHFVWEGLSEPHQVVRKDVKVTLTKEDWRHLQADVQDEMLAAFLEEDRRRSFDIAQAPLSRWVVFQTKDEEYRFVWSFHHVLLDGWSVPIVLNELLAHYAAISEGREGKLVPSQPFSQYIAWLKRQDREKAKPFWTDQLKGFHEPTSLGMGKNVAASQQKQYKEQSVLLSEEATEHLQSFTREHQLTLNTLVQGAWGWILGSYSGEEEVLFGATGSGRPADLPGVETMVGSFINTLPVRVPLQTDATLLAWLKDLQRRQLEIREYEYTPLFDIQGWSELPRGSALFESILVFENYPTVQAAKKGEDEAASATSGVSLEIHDVAAVEQTNYPLTLVAAPGKQVAFKLKYDQDRFDDAMIERVLNQMTRLMVYMSKSPELRLNDVALMDEDERKQVLIDWNRTEKEYPRELCLHHAFEQQAAKTPENIALEYKEQSLSYAGLNERANQLAHLLIAQGVKPDTTVAICVERSMEMIIGILGVLKAGAAYVPIDPAHPEERIAYMLDDSQAVVVLTQAGLADKFTQAAAPVICLGEKLFADRAHVDVDNIQTDVASTNLAYVIYTSGTTGLPKGVAVEHRSAMNMVQAYIAYFGLDESSRVLQFTSFSFDVSVSEIWQALLSGGTLVIEDRESLLPGPDLVRTLRERRISKVSMASSLLASLPVAEYPDLAVLEVGGDACSRELVARYATGRKFFNCYGPTEATVGTVIKQLTLDDDTPTIGRPFPNTKLYVLDQNRKPVPVGVPGELYIGGECLARGYWNRPELTAERFVANPFGQPGERLYRTGDLVRYLPDGNVDYLGRFDDQVKIRGYRIELGEIAEALRQHAAIREAVVLAREVRPGDKRLAAYLTSAAEQELSVDEIKQWLKEKLPDYMVPASYTWLPAIPLNVNGKVDRKALPAPDWGQITAAYVAPRNPLEEMIANVFAEVLAVEKVGIDDNFFELGGHSLLATQTVSRLREIVGVELQLRTLFEHPTVAGLGEQLELLTKQSSRKLAPPIGKVSRKEPLPLSFTQQRLWFLEQFTQNSSINNIPSFLRIQGELDVAAWEASFSAIILRHESLRTSFEVRDGRPVQVIQPHGDWAMTRIDLRALEPAEREAEIKRLAEQAIVQPFDLTKGLLLRASLVQLDANDFVFLFVMHHIASDGWSMGILLSELMTNYKAFRQGEASPLGELPIQYADFAVWQREWLSGEVLAEQLGYWREKLKGSEPLLQLPTDRPRPPVQTYEGEKMSVQFGAELLKQLQSLSRKEGATLFMTLFAAFQTLLYRYTNQDDILVGTPIAGRNKQETEQLIGYFINTLVLRTDMSGHPSFRELLARVRETALEAYAHQDVPFEKLLDELQLERSMSYSPLFQVMFILQNIPVQAEPAGDIQLSSFDLELGAVTSKFDMTVTMVETPDGLLATLEYNKALFDSSTITRMVEHFHKLMEEIVANPDQSITLLPLMREEEEQLLITEWNRTEVPYSREKCVHEMIEEMVSKAPDSIALIVGEQRVTYGELNRQANQLAHYLRKQGVGPEVLVGICAERTVEMMIGLLAILKAGGAYVPIDPAYPAERIAYIIGHSQIPVLLTQEHLLPTLPEHQAKVICLDRDWATVAVESEENPGKLATSDNLIYVIYTSGSTGNPKGVALEHRSVIYFLSWAHDTYTPEEMSGVLFSTSICFDLSVYEMFATLTMGGKVIMAENALQLPALPAADQVTLVNTVPSAATELVRMKGIPASVRVINLCGEPLSNRLAQELYAFPHVEKVFNLYGPTEDTVYSTHAIVTKGATNEPLIGRPQFNTHVFVLDSHRKPVPVGVPGELYLSGSGLARGYLHRPDLTAERFVQNPFREPGARMYRTGDLVRYLPDGNLQFVGRVDYQVKIRGYRIELGEIESVLNRFPGVKEVVLLAREDREGDKCLVAYIVFEADCTSKIHDLNHFLADKLPAYMIPQHYMILDSLPKTPNGKLDRKALPKPEYDRSEAGVEYVAPQTPVEIMLHAHWAAVLEMETIGVHDNFFEIGGHSLLATQLIFKVREELQLEVPLRILFETPTIAGMAKTIEEIIKHGLTSVSQEIDAKGLQDEVALDPAILAEQPYEGDPSQFQAALLTGATGFLGAFLLRDLLQMTDADIYCLVRASGEEEGLARLRKTLQLYELWDEAQAHRIIPVIGDLAQPRLGLSAGQFDALAATVDVIYHNGALVNFVYPYAALKKANVIGTEEIIRLAAAKKTKPVHFVSTIFTFASEEGEESVAVREEDMPENSRILTSGYTQSKWVAEHIVNLARQRGIPTAIYRCGRMTGDSETGACQKDDLMWRIAAGIIDLGKAPDMSGDLDMMPVDFASKGIVHLSMTEHSVNSNFHLLNPNATDYDDLIAAIENKGFELERVTMDEWIEAVQEDAKDKGMDANSAAPLGNLFSDGHSSRGSVVYVGNKTTRLLRQADIECPEIDEEVFAKVLDYFARTGQLRVTQNTRN</sequence>
<protein>
    <recommendedName>
        <fullName>Linear gramicidin synthase subunit D</fullName>
    </recommendedName>
    <domain>
        <recommendedName>
            <fullName>ATP-dependent D-leucine adenylase</fullName>
            <shortName>D-LeuA</shortName>
        </recommendedName>
        <alternativeName>
            <fullName>D-leucine activase</fullName>
        </alternativeName>
    </domain>
    <domain>
        <recommendedName>
            <fullName>Leucine racemase [ATP-hydrolyzing]</fullName>
            <ecNumber>5.1.1.-</ecNumber>
        </recommendedName>
    </domain>
    <domain>
        <recommendedName>
            <fullName>ATP-dependent tryptophan adenylase</fullName>
            <shortName>TrpA</shortName>
        </recommendedName>
        <alternativeName>
            <fullName>Tryptophan activase</fullName>
        </alternativeName>
    </domain>
    <domain>
        <recommendedName>
            <fullName>ATP-dependent glycine adenylase</fullName>
            <shortName>GlyA</shortName>
        </recommendedName>
        <alternativeName>
            <fullName>Glycine activase</fullName>
        </alternativeName>
    </domain>
    <domain>
        <recommendedName>
            <fullName>Linear gramicidin--PCP reductase</fullName>
            <ecNumber>1.-.-.-</ecNumber>
        </recommendedName>
    </domain>
</protein>
<gene>
    <name type="primary">lgrD</name>
</gene>
<comment type="function">
    <text>Activates the 13th to the 16th (Trp, D-Leu, Trp and Gly) amino acids in linear gramicidin and catalyzes the formation of the peptide bond between them. This enzyme is also responsible for the epimerization of the 14th (D-Leu) amino acid. It also catalyzes the NAD(P)H-dependent reduction of the C-terminal glycine residue of the N-formylated 16-mer peptide, that binds to the peptidyl carrier domain of the terminal module of this protein, to form a peptidyl-aldehyde intermediate that is released from the enzyme complex.</text>
</comment>
<comment type="cofactor">
    <cofactor evidence="2">
        <name>pantetheine 4'-phosphate</name>
        <dbReference type="ChEBI" id="CHEBI:47942"/>
    </cofactor>
    <text evidence="2">Binds 4 phosphopantetheines covalently.</text>
</comment>
<comment type="subunit">
    <text>Large multienzyme complex composed of 4 subunits; LgrA, LgrB, LgrC and LgrD.</text>
</comment>
<comment type="domain">
    <text>Four module-bearing peptide synthase with a C-terminal epimerization domain. Each module incorporates one amino acid into the peptide product and can be further subdivided into domains responsible for substrate adenylation, thiolation, condensation (not for the initiation module), and epimerization (optional). Contains a reductase domain at the C-terminus.</text>
</comment>
<comment type="miscellaneous">
    <text>Linear gramicidin is a pentadecapeptide antibiotic produced during sporulation.</text>
</comment>
<comment type="similarity">
    <text evidence="2">Belongs to the ATP-dependent AMP-binding enzyme family.</text>
</comment>
<name>LGRD_BREPA</name>
<keyword id="KW-0045">Antibiotic biosynthesis</keyword>
<keyword id="KW-0413">Isomerase</keyword>
<keyword id="KW-0436">Ligase</keyword>
<keyword id="KW-0511">Multifunctional enzyme</keyword>
<keyword id="KW-0520">NAD</keyword>
<keyword id="KW-0521">NADP</keyword>
<keyword id="KW-0560">Oxidoreductase</keyword>
<keyword id="KW-0596">Phosphopantetheine</keyword>
<keyword id="KW-0597">Phosphoprotein</keyword>
<keyword id="KW-0677">Repeat</keyword>
<proteinExistence type="evidence at protein level"/>
<organism>
    <name type="scientific">Brevibacillus parabrevis</name>
    <dbReference type="NCBI Taxonomy" id="54914"/>
    <lineage>
        <taxon>Bacteria</taxon>
        <taxon>Bacillati</taxon>
        <taxon>Bacillota</taxon>
        <taxon>Bacilli</taxon>
        <taxon>Bacillales</taxon>
        <taxon>Paenibacillaceae</taxon>
        <taxon>Brevibacillus</taxon>
    </lineage>
</organism>
<feature type="chain" id="PRO_0000193092" description="Linear gramicidin synthase subunit D">
    <location>
        <begin position="1"/>
        <end position="5085"/>
    </location>
</feature>
<feature type="domain" description="Carrier 1" evidence="1">
    <location>
        <begin position="962"/>
        <end position="1037"/>
    </location>
</feature>
<feature type="domain" description="Carrier 2" evidence="1">
    <location>
        <begin position="2023"/>
        <end position="2097"/>
    </location>
</feature>
<feature type="domain" description="Carrier 3" evidence="1">
    <location>
        <begin position="3544"/>
        <end position="3619"/>
    </location>
</feature>
<feature type="domain" description="Carrier 4" evidence="1">
    <location>
        <begin position="4601"/>
        <end position="4676"/>
    </location>
</feature>
<feature type="modified residue" description="O-(pantetheine 4'-phosphoryl)serine" evidence="1">
    <location>
        <position position="997"/>
    </location>
</feature>
<feature type="modified residue" description="O-(pantetheine 4'-phosphoryl)serine" evidence="1">
    <location>
        <position position="2058"/>
    </location>
</feature>
<feature type="modified residue" description="O-(pantetheine 4'-phosphoryl)serine" evidence="1">
    <location>
        <position position="3579"/>
    </location>
</feature>
<feature type="modified residue" description="O-(pantetheine 4'-phosphoryl)serine" evidence="1">
    <location>
        <position position="4636"/>
    </location>
</feature>
<dbReference type="EC" id="5.1.1.-"/>
<dbReference type="EC" id="1.-.-.-"/>
<dbReference type="EMBL" id="AJ566197">
    <property type="protein sequence ID" value="CAD92852.1"/>
    <property type="molecule type" value="Genomic_DNA"/>
</dbReference>
<dbReference type="SMR" id="Q70LM4"/>
<dbReference type="STRING" id="54914.AV540_01950"/>
<dbReference type="GO" id="GO:0005829">
    <property type="term" value="C:cytosol"/>
    <property type="evidence" value="ECO:0007669"/>
    <property type="project" value="TreeGrafter"/>
</dbReference>
<dbReference type="GO" id="GO:0016853">
    <property type="term" value="F:isomerase activity"/>
    <property type="evidence" value="ECO:0007669"/>
    <property type="project" value="UniProtKB-KW"/>
</dbReference>
<dbReference type="GO" id="GO:0016874">
    <property type="term" value="F:ligase activity"/>
    <property type="evidence" value="ECO:0007669"/>
    <property type="project" value="UniProtKB-KW"/>
</dbReference>
<dbReference type="GO" id="GO:0016491">
    <property type="term" value="F:oxidoreductase activity"/>
    <property type="evidence" value="ECO:0007669"/>
    <property type="project" value="UniProtKB-KW"/>
</dbReference>
<dbReference type="GO" id="GO:0031177">
    <property type="term" value="F:phosphopantetheine binding"/>
    <property type="evidence" value="ECO:0007669"/>
    <property type="project" value="InterPro"/>
</dbReference>
<dbReference type="GO" id="GO:0043041">
    <property type="term" value="P:amino acid activation for nonribosomal peptide biosynthetic process"/>
    <property type="evidence" value="ECO:0007669"/>
    <property type="project" value="TreeGrafter"/>
</dbReference>
<dbReference type="GO" id="GO:0017000">
    <property type="term" value="P:antibiotic biosynthetic process"/>
    <property type="evidence" value="ECO:0007669"/>
    <property type="project" value="UniProtKB-KW"/>
</dbReference>
<dbReference type="GO" id="GO:0008610">
    <property type="term" value="P:lipid biosynthetic process"/>
    <property type="evidence" value="ECO:0007669"/>
    <property type="project" value="UniProtKB-ARBA"/>
</dbReference>
<dbReference type="GO" id="GO:0044550">
    <property type="term" value="P:secondary metabolite biosynthetic process"/>
    <property type="evidence" value="ECO:0007669"/>
    <property type="project" value="TreeGrafter"/>
</dbReference>
<dbReference type="CDD" id="cd17652">
    <property type="entry name" value="A_NRPS_CmdD_like"/>
    <property type="match status" value="2"/>
</dbReference>
<dbReference type="CDD" id="cd12115">
    <property type="entry name" value="A_NRPS_Sfm_like"/>
    <property type="match status" value="1"/>
</dbReference>
<dbReference type="CDD" id="cd17651">
    <property type="entry name" value="A_NRPS_VisG_like"/>
    <property type="match status" value="1"/>
</dbReference>
<dbReference type="CDD" id="cd19543">
    <property type="entry name" value="DCL_NRPS"/>
    <property type="match status" value="2"/>
</dbReference>
<dbReference type="CDD" id="cd19534">
    <property type="entry name" value="E_NRPS"/>
    <property type="match status" value="1"/>
</dbReference>
<dbReference type="CDD" id="cd19531">
    <property type="entry name" value="LCL_NRPS-like"/>
    <property type="match status" value="2"/>
</dbReference>
<dbReference type="CDD" id="cd05235">
    <property type="entry name" value="SDR_e1"/>
    <property type="match status" value="1"/>
</dbReference>
<dbReference type="FunFam" id="3.30.300.30:FF:000010">
    <property type="entry name" value="Enterobactin synthetase component F"/>
    <property type="match status" value="4"/>
</dbReference>
<dbReference type="FunFam" id="1.10.1200.10:FF:000016">
    <property type="entry name" value="Non-ribosomal peptide synthase"/>
    <property type="match status" value="1"/>
</dbReference>
<dbReference type="FunFam" id="3.30.559.10:FF:000012">
    <property type="entry name" value="Non-ribosomal peptide synthetase"/>
    <property type="match status" value="2"/>
</dbReference>
<dbReference type="FunFam" id="3.30.559.30:FF:000001">
    <property type="entry name" value="Non-ribosomal peptide synthetase"/>
    <property type="match status" value="1"/>
</dbReference>
<dbReference type="FunFam" id="3.40.50.12780:FF:000012">
    <property type="entry name" value="Non-ribosomal peptide synthetase"/>
    <property type="match status" value="4"/>
</dbReference>
<dbReference type="FunFam" id="3.40.50.980:FF:000001">
    <property type="entry name" value="Non-ribosomal peptide synthetase"/>
    <property type="match status" value="4"/>
</dbReference>
<dbReference type="FunFam" id="2.30.38.10:FF:000001">
    <property type="entry name" value="Non-ribosomal peptide synthetase PvdI"/>
    <property type="match status" value="4"/>
</dbReference>
<dbReference type="FunFam" id="1.10.1200.10:FF:000005">
    <property type="entry name" value="Nonribosomal peptide synthetase 1"/>
    <property type="match status" value="3"/>
</dbReference>
<dbReference type="Gene3D" id="3.30.300.30">
    <property type="match status" value="4"/>
</dbReference>
<dbReference type="Gene3D" id="3.40.50.980">
    <property type="match status" value="8"/>
</dbReference>
<dbReference type="Gene3D" id="1.10.1200.10">
    <property type="entry name" value="ACP-like"/>
    <property type="match status" value="4"/>
</dbReference>
<dbReference type="Gene3D" id="3.30.559.10">
    <property type="entry name" value="Chloramphenicol acetyltransferase-like domain"/>
    <property type="match status" value="5"/>
</dbReference>
<dbReference type="Gene3D" id="2.30.38.10">
    <property type="entry name" value="Luciferase, Domain 3"/>
    <property type="match status" value="4"/>
</dbReference>
<dbReference type="Gene3D" id="3.40.50.720">
    <property type="entry name" value="NAD(P)-binding Rossmann-like Domain"/>
    <property type="match status" value="1"/>
</dbReference>
<dbReference type="Gene3D" id="3.30.559.30">
    <property type="entry name" value="Nonribosomal peptide synthetase, condensation domain"/>
    <property type="match status" value="5"/>
</dbReference>
<dbReference type="InterPro" id="IPR010071">
    <property type="entry name" value="AA_adenyl_dom"/>
</dbReference>
<dbReference type="InterPro" id="IPR036736">
    <property type="entry name" value="ACP-like_sf"/>
</dbReference>
<dbReference type="InterPro" id="IPR025110">
    <property type="entry name" value="AMP-bd_C"/>
</dbReference>
<dbReference type="InterPro" id="IPR045851">
    <property type="entry name" value="AMP-bd_C_sf"/>
</dbReference>
<dbReference type="InterPro" id="IPR020845">
    <property type="entry name" value="AMP-binding_CS"/>
</dbReference>
<dbReference type="InterPro" id="IPR000873">
    <property type="entry name" value="AMP-dep_synth/lig_dom"/>
</dbReference>
<dbReference type="InterPro" id="IPR023213">
    <property type="entry name" value="CAT-like_dom_sf"/>
</dbReference>
<dbReference type="InterPro" id="IPR001242">
    <property type="entry name" value="Condensatn"/>
</dbReference>
<dbReference type="InterPro" id="IPR013120">
    <property type="entry name" value="Far_NAD-bd"/>
</dbReference>
<dbReference type="InterPro" id="IPR036291">
    <property type="entry name" value="NAD(P)-bd_dom_sf"/>
</dbReference>
<dbReference type="InterPro" id="IPR010060">
    <property type="entry name" value="NRPS_synth"/>
</dbReference>
<dbReference type="InterPro" id="IPR020806">
    <property type="entry name" value="PKS_PP-bd"/>
</dbReference>
<dbReference type="InterPro" id="IPR009081">
    <property type="entry name" value="PP-bd_ACP"/>
</dbReference>
<dbReference type="InterPro" id="IPR006162">
    <property type="entry name" value="Ppantetheine_attach_site"/>
</dbReference>
<dbReference type="InterPro" id="IPR010080">
    <property type="entry name" value="Thioester_reductase-like_dom"/>
</dbReference>
<dbReference type="NCBIfam" id="TIGR01733">
    <property type="entry name" value="AA-adenyl-dom"/>
    <property type="match status" value="4"/>
</dbReference>
<dbReference type="NCBIfam" id="TIGR01720">
    <property type="entry name" value="NRPS-para261"/>
    <property type="match status" value="1"/>
</dbReference>
<dbReference type="NCBIfam" id="NF003417">
    <property type="entry name" value="PRK04813.1"/>
    <property type="match status" value="4"/>
</dbReference>
<dbReference type="NCBIfam" id="NF004282">
    <property type="entry name" value="PRK05691.1"/>
    <property type="match status" value="4"/>
</dbReference>
<dbReference type="NCBIfam" id="TIGR01746">
    <property type="entry name" value="Thioester-redct"/>
    <property type="match status" value="1"/>
</dbReference>
<dbReference type="PANTHER" id="PTHR45527">
    <property type="entry name" value="NONRIBOSOMAL PEPTIDE SYNTHETASE"/>
    <property type="match status" value="1"/>
</dbReference>
<dbReference type="PANTHER" id="PTHR45527:SF14">
    <property type="entry name" value="PLIPASTATIN SYNTHASE SUBUNIT B"/>
    <property type="match status" value="1"/>
</dbReference>
<dbReference type="Pfam" id="PF00501">
    <property type="entry name" value="AMP-binding"/>
    <property type="match status" value="4"/>
</dbReference>
<dbReference type="Pfam" id="PF13193">
    <property type="entry name" value="AMP-binding_C"/>
    <property type="match status" value="4"/>
</dbReference>
<dbReference type="Pfam" id="PF00668">
    <property type="entry name" value="Condensation"/>
    <property type="match status" value="5"/>
</dbReference>
<dbReference type="Pfam" id="PF07993">
    <property type="entry name" value="NAD_binding_4"/>
    <property type="match status" value="1"/>
</dbReference>
<dbReference type="Pfam" id="PF00550">
    <property type="entry name" value="PP-binding"/>
    <property type="match status" value="4"/>
</dbReference>
<dbReference type="SMART" id="SM00823">
    <property type="entry name" value="PKS_PP"/>
    <property type="match status" value="4"/>
</dbReference>
<dbReference type="SUPFAM" id="SSF56801">
    <property type="entry name" value="Acetyl-CoA synthetase-like"/>
    <property type="match status" value="4"/>
</dbReference>
<dbReference type="SUPFAM" id="SSF47336">
    <property type="entry name" value="ACP-like"/>
    <property type="match status" value="4"/>
</dbReference>
<dbReference type="SUPFAM" id="SSF52777">
    <property type="entry name" value="CoA-dependent acyltransferases"/>
    <property type="match status" value="10"/>
</dbReference>
<dbReference type="SUPFAM" id="SSF51735">
    <property type="entry name" value="NAD(P)-binding Rossmann-fold domains"/>
    <property type="match status" value="1"/>
</dbReference>
<dbReference type="PROSITE" id="PS00455">
    <property type="entry name" value="AMP_BINDING"/>
    <property type="match status" value="4"/>
</dbReference>
<dbReference type="PROSITE" id="PS50075">
    <property type="entry name" value="CARRIER"/>
    <property type="match status" value="4"/>
</dbReference>
<dbReference type="PROSITE" id="PS00012">
    <property type="entry name" value="PHOSPHOPANTETHEINE"/>
    <property type="match status" value="4"/>
</dbReference>
<reference key="1">
    <citation type="journal article" date="2004" name="J. Biol. Chem.">
        <title>The linear pentadecapeptide gramicidin is assembled by four multimodular nonribosomal peptide synthetases that comprise 16 modules with 57 catalytic domains.</title>
        <authorList>
            <person name="Kessler N."/>
            <person name="Schuhmann H."/>
            <person name="Morneweg S."/>
            <person name="Linne U."/>
            <person name="Marahiel M.A."/>
        </authorList>
    </citation>
    <scope>NUCLEOTIDE SEQUENCE [GENOMIC DNA]</scope>
    <source>
        <strain>ATCC 8185 / DSM 362 / JCM 20017 / IAM 1031 / NBRC 3331 / NCDO 717 / NCIMB 8598 / NRS 751 / BG</strain>
    </source>
</reference>
<reference key="2">
    <citation type="journal article" date="2005" name="Biochemistry">
        <title>Synthesis of linear gramicidin requires the cooperation of two independent reductases.</title>
        <authorList>
            <person name="Schracke N."/>
            <person name="Linne U."/>
            <person name="Mahlert C."/>
            <person name="Marahiel M.A."/>
        </authorList>
    </citation>
    <scope>CHARACTERIZATION OF REDUCTASE ACTIVITY</scope>
    <source>
        <strain>ATCC 8185 / DSM 362 / JCM 20017 / IAM 1031 / NBRC 3331 / NCDO 717 / NCIMB 8598 / NRS 751 / BG</strain>
    </source>
</reference>